<organism>
    <name type="scientific">Oryza sativa subsp. japonica</name>
    <name type="common">Rice</name>
    <dbReference type="NCBI Taxonomy" id="39947"/>
    <lineage>
        <taxon>Eukaryota</taxon>
        <taxon>Viridiplantae</taxon>
        <taxon>Streptophyta</taxon>
        <taxon>Embryophyta</taxon>
        <taxon>Tracheophyta</taxon>
        <taxon>Spermatophyta</taxon>
        <taxon>Magnoliopsida</taxon>
        <taxon>Liliopsida</taxon>
        <taxon>Poales</taxon>
        <taxon>Poaceae</taxon>
        <taxon>BOP clade</taxon>
        <taxon>Oryzoideae</taxon>
        <taxon>Oryzeae</taxon>
        <taxon>Oryzinae</taxon>
        <taxon>Oryza</taxon>
        <taxon>Oryza sativa</taxon>
    </lineage>
</organism>
<keyword id="KW-0927">Auxin signaling pathway</keyword>
<keyword id="KW-0539">Nucleus</keyword>
<keyword id="KW-1185">Reference proteome</keyword>
<keyword id="KW-0678">Repressor</keyword>
<keyword id="KW-0804">Transcription</keyword>
<keyword id="KW-0805">Transcription regulation</keyword>
<comment type="function">
    <text evidence="1">Aux/IAA proteins are short-lived transcriptional factors that function as repressors of early auxin response genes at low auxin concentrations.</text>
</comment>
<comment type="subunit">
    <text evidence="1">Homodimers and heterodimers.</text>
</comment>
<comment type="subcellular location">
    <subcellularLocation>
        <location evidence="1">Nucleus</location>
    </subcellularLocation>
</comment>
<comment type="tissue specificity">
    <text evidence="4">Highly expressed in flowers. Expressed at low levels in roots and shoots.</text>
</comment>
<comment type="induction">
    <text evidence="4">By auxin.</text>
</comment>
<comment type="similarity">
    <text evidence="5">Belongs to the Aux/IAA family.</text>
</comment>
<dbReference type="EMBL" id="AP002524">
    <property type="protein sequence ID" value="BAD67830.1"/>
    <property type="molecule type" value="Genomic_DNA"/>
</dbReference>
<dbReference type="EMBL" id="AP002903">
    <property type="protein sequence ID" value="BAD67992.1"/>
    <property type="molecule type" value="Genomic_DNA"/>
</dbReference>
<dbReference type="EMBL" id="AP008207">
    <property type="protein sequence ID" value="BAF04106.1"/>
    <property type="molecule type" value="Genomic_DNA"/>
</dbReference>
<dbReference type="EMBL" id="AP014957">
    <property type="protein sequence ID" value="BAS70703.1"/>
    <property type="molecule type" value="Genomic_DNA"/>
</dbReference>
<dbReference type="EMBL" id="AK060091">
    <property type="protein sequence ID" value="BAG87314.1"/>
    <property type="molecule type" value="mRNA"/>
</dbReference>
<dbReference type="EMBL" id="AK069242">
    <property type="protein sequence ID" value="BAG91334.1"/>
    <property type="molecule type" value="mRNA"/>
</dbReference>
<dbReference type="EMBL" id="AK100800">
    <property type="protein sequence ID" value="BAG94770.1"/>
    <property type="molecule type" value="mRNA"/>
</dbReference>
<dbReference type="EMBL" id="AK109373">
    <property type="protein sequence ID" value="BAG98702.1"/>
    <property type="molecule type" value="mRNA"/>
</dbReference>
<dbReference type="RefSeq" id="XP_015622507.1">
    <property type="nucleotide sequence ID" value="XM_015767021.1"/>
</dbReference>
<dbReference type="SMR" id="Q5VRD1"/>
<dbReference type="FunCoup" id="Q5VRD1">
    <property type="interactions" value="18"/>
</dbReference>
<dbReference type="STRING" id="39947.Q5VRD1"/>
<dbReference type="PaxDb" id="39947-Q5VRD1"/>
<dbReference type="EnsemblPlants" id="Os01t0178500-02">
    <property type="protein sequence ID" value="Os01t0178500-02"/>
    <property type="gene ID" value="Os01g0178500"/>
</dbReference>
<dbReference type="Gramene" id="Os01t0178500-02">
    <property type="protein sequence ID" value="Os01t0178500-02"/>
    <property type="gene ID" value="Os01g0178500"/>
</dbReference>
<dbReference type="KEGG" id="dosa:Os01g0178500"/>
<dbReference type="eggNOG" id="ENOG502RYMU">
    <property type="taxonomic scope" value="Eukaryota"/>
</dbReference>
<dbReference type="HOGENOM" id="CLU_049393_1_4_1"/>
<dbReference type="InParanoid" id="Q5VRD1"/>
<dbReference type="OMA" id="LCAFEEM"/>
<dbReference type="OrthoDB" id="1287782at2759"/>
<dbReference type="Proteomes" id="UP000000763">
    <property type="component" value="Chromosome 1"/>
</dbReference>
<dbReference type="Proteomes" id="UP000059680">
    <property type="component" value="Chromosome 1"/>
</dbReference>
<dbReference type="GO" id="GO:0005634">
    <property type="term" value="C:nucleus"/>
    <property type="evidence" value="ECO:0007669"/>
    <property type="project" value="UniProtKB-SubCell"/>
</dbReference>
<dbReference type="GO" id="GO:0009734">
    <property type="term" value="P:auxin-activated signaling pathway"/>
    <property type="evidence" value="ECO:0007669"/>
    <property type="project" value="UniProtKB-KW"/>
</dbReference>
<dbReference type="GO" id="GO:0006355">
    <property type="term" value="P:regulation of DNA-templated transcription"/>
    <property type="evidence" value="ECO:0007669"/>
    <property type="project" value="InterPro"/>
</dbReference>
<dbReference type="GO" id="GO:0009733">
    <property type="term" value="P:response to auxin"/>
    <property type="evidence" value="ECO:0000305"/>
    <property type="project" value="Gramene"/>
</dbReference>
<dbReference type="FunFam" id="3.10.20.90:FF:000078">
    <property type="entry name" value="Auxin-responsive protein"/>
    <property type="match status" value="1"/>
</dbReference>
<dbReference type="Gene3D" id="3.10.20.90">
    <property type="entry name" value="Phosphatidylinositol 3-kinase Catalytic Subunit, Chain A, domain 1"/>
    <property type="match status" value="1"/>
</dbReference>
<dbReference type="InterPro" id="IPR033389">
    <property type="entry name" value="AUX/IAA_dom"/>
</dbReference>
<dbReference type="InterPro" id="IPR003311">
    <property type="entry name" value="AUX_IAA"/>
</dbReference>
<dbReference type="InterPro" id="IPR053793">
    <property type="entry name" value="PB1-like"/>
</dbReference>
<dbReference type="PANTHER" id="PTHR31734:SF34">
    <property type="entry name" value="AUXIN-RESPONSIVE PROTEIN IAA15"/>
    <property type="match status" value="1"/>
</dbReference>
<dbReference type="PANTHER" id="PTHR31734">
    <property type="entry name" value="AUXIN-RESPONSIVE PROTEIN IAA17"/>
    <property type="match status" value="1"/>
</dbReference>
<dbReference type="Pfam" id="PF02309">
    <property type="entry name" value="AUX_IAA"/>
    <property type="match status" value="1"/>
</dbReference>
<dbReference type="SUPFAM" id="SSF54277">
    <property type="entry name" value="CAD &amp; PB1 domains"/>
    <property type="match status" value="1"/>
</dbReference>
<dbReference type="PROSITE" id="PS51745">
    <property type="entry name" value="PB1"/>
    <property type="match status" value="1"/>
</dbReference>
<name>IAA1_ORYSJ</name>
<feature type="chain" id="PRO_0000223200" description="Auxin-responsive protein IAA1">
    <location>
        <begin position="1"/>
        <end position="199"/>
    </location>
</feature>
<feature type="domain" description="PB1" evidence="2">
    <location>
        <begin position="93"/>
        <end position="187"/>
    </location>
</feature>
<feature type="region of interest" description="Disordered" evidence="3">
    <location>
        <begin position="31"/>
        <end position="74"/>
    </location>
</feature>
<feature type="short sequence motif" description="EAR-like (transcriptional repression)" evidence="1">
    <location>
        <begin position="25"/>
        <end position="29"/>
    </location>
</feature>
<feature type="compositionally biased region" description="Low complexity" evidence="3">
    <location>
        <begin position="47"/>
        <end position="69"/>
    </location>
</feature>
<gene>
    <name type="primary">IAA1</name>
    <name type="ordered locus">Os01g0178500</name>
    <name type="ordered locus">LOC_Os01g08320</name>
    <name type="ORF">P0406H10.6-1</name>
    <name type="ORF">P0509B06.8-1</name>
</gene>
<sequence length="199" mass="21584">MSVETERSSTESSAASGLDFEDTALTLRLPGSLAAAAAPDPDRKRSSPSSSDAADAADNSSPLAAAADAPPAPKARVVGWPPVRSFRKNALAAKFVKVAVDGAPYLRKVDLEAYSGYDQLLRALQDKFFSHFTIRKFADDERKLVDAVNGTEYVPTYEDKDGDWMLVGDVPWKMFVETCQRLRLMKSSEAVNLAPRAAQ</sequence>
<proteinExistence type="evidence at transcript level"/>
<protein>
    <recommendedName>
        <fullName>Auxin-responsive protein IAA1</fullName>
    </recommendedName>
    <alternativeName>
        <fullName>Indoleacetic acid-induced protein 1</fullName>
    </alternativeName>
</protein>
<evidence type="ECO:0000250" key="1"/>
<evidence type="ECO:0000255" key="2">
    <source>
        <dbReference type="PROSITE-ProRule" id="PRU01081"/>
    </source>
</evidence>
<evidence type="ECO:0000256" key="3">
    <source>
        <dbReference type="SAM" id="MobiDB-lite"/>
    </source>
</evidence>
<evidence type="ECO:0000269" key="4">
    <source>
    </source>
</evidence>
<evidence type="ECO:0000305" key="5"/>
<accession>Q5VRD1</accession>
<accession>Q0JQ72</accession>
<reference key="1">
    <citation type="journal article" date="2002" name="Nature">
        <title>The genome sequence and structure of rice chromosome 1.</title>
        <authorList>
            <person name="Sasaki T."/>
            <person name="Matsumoto T."/>
            <person name="Yamamoto K."/>
            <person name="Sakata K."/>
            <person name="Baba T."/>
            <person name="Katayose Y."/>
            <person name="Wu J."/>
            <person name="Niimura Y."/>
            <person name="Cheng Z."/>
            <person name="Nagamura Y."/>
            <person name="Antonio B.A."/>
            <person name="Kanamori H."/>
            <person name="Hosokawa S."/>
            <person name="Masukawa M."/>
            <person name="Arikawa K."/>
            <person name="Chiden Y."/>
            <person name="Hayashi M."/>
            <person name="Okamoto M."/>
            <person name="Ando T."/>
            <person name="Aoki H."/>
            <person name="Arita K."/>
            <person name="Hamada M."/>
            <person name="Harada C."/>
            <person name="Hijishita S."/>
            <person name="Honda M."/>
            <person name="Ichikawa Y."/>
            <person name="Idonuma A."/>
            <person name="Iijima M."/>
            <person name="Ikeda M."/>
            <person name="Ikeno M."/>
            <person name="Ito S."/>
            <person name="Ito T."/>
            <person name="Ito Y."/>
            <person name="Ito Y."/>
            <person name="Iwabuchi A."/>
            <person name="Kamiya K."/>
            <person name="Karasawa W."/>
            <person name="Katagiri S."/>
            <person name="Kikuta A."/>
            <person name="Kobayashi N."/>
            <person name="Kono I."/>
            <person name="Machita K."/>
            <person name="Maehara T."/>
            <person name="Mizuno H."/>
            <person name="Mizubayashi T."/>
            <person name="Mukai Y."/>
            <person name="Nagasaki H."/>
            <person name="Nakashima M."/>
            <person name="Nakama Y."/>
            <person name="Nakamichi Y."/>
            <person name="Nakamura M."/>
            <person name="Namiki N."/>
            <person name="Negishi M."/>
            <person name="Ohta I."/>
            <person name="Ono N."/>
            <person name="Saji S."/>
            <person name="Sakai K."/>
            <person name="Shibata M."/>
            <person name="Shimokawa T."/>
            <person name="Shomura A."/>
            <person name="Song J."/>
            <person name="Takazaki Y."/>
            <person name="Terasawa K."/>
            <person name="Tsuji K."/>
            <person name="Waki K."/>
            <person name="Yamagata H."/>
            <person name="Yamane H."/>
            <person name="Yoshiki S."/>
            <person name="Yoshihara R."/>
            <person name="Yukawa K."/>
            <person name="Zhong H."/>
            <person name="Iwama H."/>
            <person name="Endo T."/>
            <person name="Ito H."/>
            <person name="Hahn J.H."/>
            <person name="Kim H.-I."/>
            <person name="Eun M.-Y."/>
            <person name="Yano M."/>
            <person name="Jiang J."/>
            <person name="Gojobori T."/>
        </authorList>
    </citation>
    <scope>NUCLEOTIDE SEQUENCE [LARGE SCALE GENOMIC DNA]</scope>
    <source>
        <strain>cv. Nipponbare</strain>
    </source>
</reference>
<reference key="2">
    <citation type="journal article" date="2005" name="Nature">
        <title>The map-based sequence of the rice genome.</title>
        <authorList>
            <consortium name="International rice genome sequencing project (IRGSP)"/>
        </authorList>
    </citation>
    <scope>NUCLEOTIDE SEQUENCE [LARGE SCALE GENOMIC DNA]</scope>
    <source>
        <strain>cv. Nipponbare</strain>
    </source>
</reference>
<reference key="3">
    <citation type="journal article" date="2008" name="Nucleic Acids Res.">
        <title>The rice annotation project database (RAP-DB): 2008 update.</title>
        <authorList>
            <consortium name="The rice annotation project (RAP)"/>
        </authorList>
    </citation>
    <scope>GENOME REANNOTATION</scope>
    <source>
        <strain>cv. Nipponbare</strain>
    </source>
</reference>
<reference key="4">
    <citation type="journal article" date="2013" name="Rice">
        <title>Improvement of the Oryza sativa Nipponbare reference genome using next generation sequence and optical map data.</title>
        <authorList>
            <person name="Kawahara Y."/>
            <person name="de la Bastide M."/>
            <person name="Hamilton J.P."/>
            <person name="Kanamori H."/>
            <person name="McCombie W.R."/>
            <person name="Ouyang S."/>
            <person name="Schwartz D.C."/>
            <person name="Tanaka T."/>
            <person name="Wu J."/>
            <person name="Zhou S."/>
            <person name="Childs K.L."/>
            <person name="Davidson R.M."/>
            <person name="Lin H."/>
            <person name="Quesada-Ocampo L."/>
            <person name="Vaillancourt B."/>
            <person name="Sakai H."/>
            <person name="Lee S.S."/>
            <person name="Kim J."/>
            <person name="Numa H."/>
            <person name="Itoh T."/>
            <person name="Buell C.R."/>
            <person name="Matsumoto T."/>
        </authorList>
    </citation>
    <scope>GENOME REANNOTATION</scope>
    <source>
        <strain>cv. Nipponbare</strain>
    </source>
</reference>
<reference key="5">
    <citation type="journal article" date="2003" name="Science">
        <title>Collection, mapping, and annotation of over 28,000 cDNA clones from japonica rice.</title>
        <authorList>
            <consortium name="The rice full-length cDNA consortium"/>
        </authorList>
    </citation>
    <scope>NUCLEOTIDE SEQUENCE [LARGE SCALE MRNA]</scope>
    <source>
        <strain>cv. Nipponbare</strain>
    </source>
</reference>
<reference key="6">
    <citation type="journal article" date="2006" name="Funct. Integr. Genomics">
        <title>Structure and expression analysis of early auxin-responsive Aux/IAA gene family in rice (Oryza sativa).</title>
        <authorList>
            <person name="Jain M."/>
            <person name="Kaur N."/>
            <person name="Garg R."/>
            <person name="Thakur J.K."/>
            <person name="Tyagi A.K."/>
            <person name="Khurana J.P."/>
        </authorList>
    </citation>
    <scope>TISSUE SPECIFICITY</scope>
    <scope>INDUCTION</scope>
    <scope>NOMENCLATURE</scope>
</reference>